<organism>
    <name type="scientific">Staphylococcus aureus (strain NCTC 8325 / PS 47)</name>
    <dbReference type="NCBI Taxonomy" id="93061"/>
    <lineage>
        <taxon>Bacteria</taxon>
        <taxon>Bacillati</taxon>
        <taxon>Bacillota</taxon>
        <taxon>Bacilli</taxon>
        <taxon>Bacillales</taxon>
        <taxon>Staphylococcaceae</taxon>
        <taxon>Staphylococcus</taxon>
    </lineage>
</organism>
<proteinExistence type="evidence at protein level"/>
<accession>Q2FZL7</accession>
<feature type="chain" id="PRO_0000341859" description="2-succinyl-5-enolpyruvyl-6-hydroxy-3-cyclohexene-1-carboxylate synthase">
    <location>
        <begin position="1"/>
        <end position="557"/>
    </location>
</feature>
<feature type="helix" evidence="2">
    <location>
        <begin position="3"/>
        <end position="21"/>
    </location>
</feature>
<feature type="strand" evidence="2">
    <location>
        <begin position="26"/>
        <end position="29"/>
    </location>
</feature>
<feature type="helix" evidence="2">
    <location>
        <begin position="36"/>
        <end position="44"/>
    </location>
</feature>
<feature type="strand" evidence="2">
    <location>
        <begin position="49"/>
        <end position="52"/>
    </location>
</feature>
<feature type="helix" evidence="2">
    <location>
        <begin position="56"/>
        <end position="70"/>
    </location>
</feature>
<feature type="strand" evidence="2">
    <location>
        <begin position="74"/>
        <end position="78"/>
    </location>
</feature>
<feature type="helix" evidence="2">
    <location>
        <begin position="82"/>
        <end position="85"/>
    </location>
</feature>
<feature type="helix" evidence="2">
    <location>
        <begin position="88"/>
        <end position="97"/>
    </location>
</feature>
<feature type="strand" evidence="2">
    <location>
        <begin position="101"/>
        <end position="107"/>
    </location>
</feature>
<feature type="helix" evidence="2">
    <location>
        <begin position="110"/>
        <end position="112"/>
    </location>
</feature>
<feature type="turn" evidence="2">
    <location>
        <begin position="124"/>
        <end position="130"/>
    </location>
</feature>
<feature type="strand" evidence="2">
    <location>
        <begin position="132"/>
        <end position="136"/>
    </location>
</feature>
<feature type="helix" evidence="2">
    <location>
        <begin position="144"/>
        <end position="158"/>
    </location>
</feature>
<feature type="turn" evidence="2">
    <location>
        <begin position="159"/>
        <end position="161"/>
    </location>
</feature>
<feature type="strand" evidence="2">
    <location>
        <begin position="169"/>
        <end position="174"/>
    </location>
</feature>
<feature type="helix" evidence="2">
    <location>
        <begin position="186"/>
        <end position="188"/>
    </location>
</feature>
<feature type="strand" evidence="2">
    <location>
        <begin position="199"/>
        <end position="203"/>
    </location>
</feature>
<feature type="helix" evidence="2">
    <location>
        <begin position="206"/>
        <end position="208"/>
    </location>
</feature>
<feature type="helix" evidence="2">
    <location>
        <begin position="209"/>
        <end position="212"/>
    </location>
</feature>
<feature type="strand" evidence="2">
    <location>
        <begin position="214"/>
        <end position="221"/>
    </location>
</feature>
<feature type="helix" evidence="2">
    <location>
        <begin position="230"/>
        <end position="239"/>
    </location>
</feature>
<feature type="strand" evidence="2">
    <location>
        <begin position="243"/>
        <end position="245"/>
    </location>
</feature>
<feature type="helix" evidence="2">
    <location>
        <begin position="247"/>
        <end position="249"/>
    </location>
</feature>
<feature type="helix" evidence="2">
    <location>
        <begin position="252"/>
        <end position="254"/>
    </location>
</feature>
<feature type="strand" evidence="2">
    <location>
        <begin position="259"/>
        <end position="261"/>
    </location>
</feature>
<feature type="helix" evidence="2">
    <location>
        <begin position="263"/>
        <end position="268"/>
    </location>
</feature>
<feature type="strand" evidence="2">
    <location>
        <begin position="276"/>
        <end position="283"/>
    </location>
</feature>
<feature type="helix" evidence="2">
    <location>
        <begin position="288"/>
        <end position="294"/>
    </location>
</feature>
<feature type="strand" evidence="2">
    <location>
        <begin position="299"/>
        <end position="309"/>
    </location>
</feature>
<feature type="strand" evidence="2">
    <location>
        <begin position="318"/>
        <end position="323"/>
    </location>
</feature>
<feature type="helix" evidence="2">
    <location>
        <begin position="325"/>
        <end position="333"/>
    </location>
</feature>
<feature type="helix" evidence="2">
    <location>
        <begin position="341"/>
        <end position="364"/>
    </location>
</feature>
<feature type="helix" evidence="2">
    <location>
        <begin position="368"/>
        <end position="378"/>
    </location>
</feature>
<feature type="strand" evidence="2">
    <location>
        <begin position="384"/>
        <end position="387"/>
    </location>
</feature>
<feature type="helix" evidence="2">
    <location>
        <begin position="391"/>
        <end position="399"/>
    </location>
</feature>
<feature type="strand" evidence="2">
    <location>
        <begin position="406"/>
        <end position="408"/>
    </location>
</feature>
<feature type="strand" evidence="2">
    <location>
        <begin position="416"/>
        <end position="418"/>
    </location>
</feature>
<feature type="helix" evidence="2">
    <location>
        <begin position="419"/>
        <end position="427"/>
    </location>
</feature>
<feature type="strand" evidence="2">
    <location>
        <begin position="432"/>
        <end position="437"/>
    </location>
</feature>
<feature type="helix" evidence="2">
    <location>
        <begin position="438"/>
        <end position="443"/>
    </location>
</feature>
<feature type="helix" evidence="2">
    <location>
        <begin position="445"/>
        <end position="448"/>
    </location>
</feature>
<feature type="helix" evidence="2">
    <location>
        <begin position="449"/>
        <end position="454"/>
    </location>
</feature>
<feature type="strand" evidence="2">
    <location>
        <begin position="459"/>
        <end position="464"/>
    </location>
</feature>
<feature type="helix" evidence="2">
    <location>
        <begin position="469"/>
        <end position="473"/>
    </location>
</feature>
<feature type="helix" evidence="2">
    <location>
        <begin position="476"/>
        <end position="479"/>
    </location>
</feature>
<feature type="helix" evidence="2">
    <location>
        <begin position="481"/>
        <end position="487"/>
    </location>
</feature>
<feature type="helix" evidence="2">
    <location>
        <begin position="496"/>
        <end position="502"/>
    </location>
</feature>
<feature type="strand" evidence="2">
    <location>
        <begin position="506"/>
        <end position="512"/>
    </location>
</feature>
<feature type="helix" evidence="2">
    <location>
        <begin position="513"/>
        <end position="518"/>
    </location>
</feature>
<feature type="strand" evidence="2">
    <location>
        <begin position="527"/>
        <end position="532"/>
    </location>
</feature>
<feature type="helix" evidence="2">
    <location>
        <begin position="535"/>
        <end position="547"/>
    </location>
</feature>
<feature type="helix" evidence="2">
    <location>
        <begin position="550"/>
        <end position="554"/>
    </location>
</feature>
<sequence length="557" mass="63078">MGNHKAALTKQVFTFASELYAYGVREVVISPGSRSTPLALAFEAHPNIKTWIHPDERSAAFFAVGLIKGSERPVAILCTSGTAAANYTPAIAESQISRIPLIVLTSDRPHELRSVGAPQAINQVNMFNNYVSYEFDMPIADDSKETIDAIYYQMQIASQYLYGPHKGPIHFNLPFRDPLTPDLNATELLTSEMKILPHYQKSIDASALRHILNKKKGLIIVGDMQHQEVDQILTYSTIYDLPILADPLSHLRKFDHPNVICTYDLLFRSGLDLNVDFVIRVGKPVISKKLNQWLKKTDAFQILVQNNDKIDVFPIAPDISYEISANDFFRSLMEDTTVNRVSWLEKWQCLEKKGRKEIKCYLEQATDESAFVGELIKKTSEKDALFISNSMPIRDVDNLLLNKNIDVYANRGANGIDGIVSTALGMAVHKRITLLIGDLSFYHDMNGLLMSKLNNIQMNIVLLNNDGGGIFSYLPQKESATDYFERLFGTPTGLDFEYTAKLYQFDFKRFNSVSEFKNATLLSETSTIYELITNREDNFKQHQILYQKLSEMIHDTL</sequence>
<evidence type="ECO:0000255" key="1">
    <source>
        <dbReference type="HAMAP-Rule" id="MF_01659"/>
    </source>
</evidence>
<evidence type="ECO:0007829" key="2">
    <source>
        <dbReference type="PDB" id="7TIN"/>
    </source>
</evidence>
<name>MEND_STAA8</name>
<dbReference type="EC" id="2.2.1.9" evidence="1"/>
<dbReference type="EMBL" id="CP000253">
    <property type="protein sequence ID" value="ABD30108.1"/>
    <property type="molecule type" value="Genomic_DNA"/>
</dbReference>
<dbReference type="RefSeq" id="WP_000526687.1">
    <property type="nucleotide sequence ID" value="NZ_LS483365.1"/>
</dbReference>
<dbReference type="RefSeq" id="YP_499536.1">
    <property type="nucleotide sequence ID" value="NC_007795.1"/>
</dbReference>
<dbReference type="PDB" id="7TIN">
    <property type="method" value="X-ray"/>
    <property type="resolution" value="2.35 A"/>
    <property type="chains" value="A/B/C/D=1-557"/>
</dbReference>
<dbReference type="PDBsum" id="7TIN"/>
<dbReference type="SMR" id="Q2FZL7"/>
<dbReference type="STRING" id="93061.SAOUHSC_00983"/>
<dbReference type="PaxDb" id="1280-SAXN108_1040"/>
<dbReference type="GeneID" id="3920128"/>
<dbReference type="KEGG" id="sao:SAOUHSC_00983"/>
<dbReference type="PATRIC" id="fig|93061.5.peg.903"/>
<dbReference type="eggNOG" id="COG1165">
    <property type="taxonomic scope" value="Bacteria"/>
</dbReference>
<dbReference type="HOGENOM" id="CLU_006051_3_0_9"/>
<dbReference type="OrthoDB" id="9791859at2"/>
<dbReference type="UniPathway" id="UPA00079"/>
<dbReference type="UniPathway" id="UPA01057">
    <property type="reaction ID" value="UER00164"/>
</dbReference>
<dbReference type="PRO" id="PR:Q2FZL7"/>
<dbReference type="Proteomes" id="UP000008816">
    <property type="component" value="Chromosome"/>
</dbReference>
<dbReference type="GO" id="GO:0070204">
    <property type="term" value="F:2-succinyl-5-enolpyruvyl-6-hydroxy-3-cyclohexene-1-carboxylic-acid synthase activity"/>
    <property type="evidence" value="ECO:0007669"/>
    <property type="project" value="UniProtKB-UniRule"/>
</dbReference>
<dbReference type="GO" id="GO:0000287">
    <property type="term" value="F:magnesium ion binding"/>
    <property type="evidence" value="ECO:0007669"/>
    <property type="project" value="UniProtKB-UniRule"/>
</dbReference>
<dbReference type="GO" id="GO:0030145">
    <property type="term" value="F:manganese ion binding"/>
    <property type="evidence" value="ECO:0007669"/>
    <property type="project" value="UniProtKB-UniRule"/>
</dbReference>
<dbReference type="GO" id="GO:0030976">
    <property type="term" value="F:thiamine pyrophosphate binding"/>
    <property type="evidence" value="ECO:0007669"/>
    <property type="project" value="UniProtKB-UniRule"/>
</dbReference>
<dbReference type="GO" id="GO:0009234">
    <property type="term" value="P:menaquinone biosynthetic process"/>
    <property type="evidence" value="ECO:0007669"/>
    <property type="project" value="UniProtKB-UniRule"/>
</dbReference>
<dbReference type="CDD" id="cd07037">
    <property type="entry name" value="TPP_PYR_MenD"/>
    <property type="match status" value="1"/>
</dbReference>
<dbReference type="CDD" id="cd02009">
    <property type="entry name" value="TPP_SHCHC_synthase"/>
    <property type="match status" value="1"/>
</dbReference>
<dbReference type="Gene3D" id="3.40.50.970">
    <property type="match status" value="2"/>
</dbReference>
<dbReference type="Gene3D" id="3.40.50.1220">
    <property type="entry name" value="TPP-binding domain"/>
    <property type="match status" value="1"/>
</dbReference>
<dbReference type="HAMAP" id="MF_01659">
    <property type="entry name" value="MenD"/>
    <property type="match status" value="1"/>
</dbReference>
<dbReference type="InterPro" id="IPR004433">
    <property type="entry name" value="MenaQ_synth_MenD"/>
</dbReference>
<dbReference type="InterPro" id="IPR032264">
    <property type="entry name" value="MenD_middle"/>
</dbReference>
<dbReference type="InterPro" id="IPR029061">
    <property type="entry name" value="THDP-binding"/>
</dbReference>
<dbReference type="InterPro" id="IPR012001">
    <property type="entry name" value="Thiamin_PyroP_enz_TPP-bd_dom"/>
</dbReference>
<dbReference type="InterPro" id="IPR011766">
    <property type="entry name" value="TPP_enzyme_TPP-bd"/>
</dbReference>
<dbReference type="NCBIfam" id="TIGR00173">
    <property type="entry name" value="menD"/>
    <property type="match status" value="1"/>
</dbReference>
<dbReference type="PANTHER" id="PTHR42916">
    <property type="entry name" value="2-SUCCINYL-5-ENOLPYRUVYL-6-HYDROXY-3-CYCLOHEXENE-1-CARBOXYLATE SYNTHASE"/>
    <property type="match status" value="1"/>
</dbReference>
<dbReference type="PANTHER" id="PTHR42916:SF1">
    <property type="entry name" value="PROTEIN PHYLLO, CHLOROPLASTIC"/>
    <property type="match status" value="1"/>
</dbReference>
<dbReference type="Pfam" id="PF02775">
    <property type="entry name" value="TPP_enzyme_C"/>
    <property type="match status" value="1"/>
</dbReference>
<dbReference type="Pfam" id="PF16582">
    <property type="entry name" value="TPP_enzyme_M_2"/>
    <property type="match status" value="1"/>
</dbReference>
<dbReference type="Pfam" id="PF02776">
    <property type="entry name" value="TPP_enzyme_N"/>
    <property type="match status" value="1"/>
</dbReference>
<dbReference type="PIRSF" id="PIRSF004983">
    <property type="entry name" value="MenD"/>
    <property type="match status" value="1"/>
</dbReference>
<dbReference type="SUPFAM" id="SSF52518">
    <property type="entry name" value="Thiamin diphosphate-binding fold (THDP-binding)"/>
    <property type="match status" value="2"/>
</dbReference>
<protein>
    <recommendedName>
        <fullName evidence="1">2-succinyl-5-enolpyruvyl-6-hydroxy-3-cyclohexene-1-carboxylate synthase</fullName>
        <shortName evidence="1">SEPHCHC synthase</shortName>
        <ecNumber evidence="1">2.2.1.9</ecNumber>
    </recommendedName>
    <alternativeName>
        <fullName evidence="1">Menaquinone biosynthesis protein MenD</fullName>
    </alternativeName>
</protein>
<gene>
    <name evidence="1" type="primary">menD</name>
    <name type="ordered locus">SAOUHSC_00983</name>
</gene>
<reference key="1">
    <citation type="book" date="2006" name="Gram positive pathogens, 2nd edition">
        <title>The Staphylococcus aureus NCTC 8325 genome.</title>
        <editorList>
            <person name="Fischetti V."/>
            <person name="Novick R."/>
            <person name="Ferretti J."/>
            <person name="Portnoy D."/>
            <person name="Rood J."/>
        </editorList>
        <authorList>
            <person name="Gillaspy A.F."/>
            <person name="Worrell V."/>
            <person name="Orvis J."/>
            <person name="Roe B.A."/>
            <person name="Dyer D.W."/>
            <person name="Iandolo J.J."/>
        </authorList>
    </citation>
    <scope>NUCLEOTIDE SEQUENCE [LARGE SCALE GENOMIC DNA]</scope>
    <source>
        <strain>NCTC 8325 / PS 47</strain>
    </source>
</reference>
<keyword id="KW-0002">3D-structure</keyword>
<keyword id="KW-0460">Magnesium</keyword>
<keyword id="KW-0464">Manganese</keyword>
<keyword id="KW-0474">Menaquinone biosynthesis</keyword>
<keyword id="KW-0479">Metal-binding</keyword>
<keyword id="KW-1185">Reference proteome</keyword>
<keyword id="KW-0786">Thiamine pyrophosphate</keyword>
<keyword id="KW-0808">Transferase</keyword>
<comment type="function">
    <text evidence="1">Catalyzes the thiamine diphosphate-dependent decarboxylation of 2-oxoglutarate and the subsequent addition of the resulting succinic semialdehyde-thiamine pyrophosphate anion to isochorismate to yield 2-succinyl-5-enolpyruvyl-6-hydroxy-3-cyclohexene-1-carboxylate (SEPHCHC).</text>
</comment>
<comment type="catalytic activity">
    <reaction evidence="1">
        <text>isochorismate + 2-oxoglutarate + H(+) = 5-enolpyruvoyl-6-hydroxy-2-succinyl-cyclohex-3-ene-1-carboxylate + CO2</text>
        <dbReference type="Rhea" id="RHEA:25593"/>
        <dbReference type="ChEBI" id="CHEBI:15378"/>
        <dbReference type="ChEBI" id="CHEBI:16526"/>
        <dbReference type="ChEBI" id="CHEBI:16810"/>
        <dbReference type="ChEBI" id="CHEBI:29780"/>
        <dbReference type="ChEBI" id="CHEBI:58818"/>
        <dbReference type="EC" id="2.2.1.9"/>
    </reaction>
</comment>
<comment type="cofactor">
    <cofactor evidence="1">
        <name>Mg(2+)</name>
        <dbReference type="ChEBI" id="CHEBI:18420"/>
    </cofactor>
    <cofactor evidence="1">
        <name>Mn(2+)</name>
        <dbReference type="ChEBI" id="CHEBI:29035"/>
    </cofactor>
</comment>
<comment type="cofactor">
    <cofactor evidence="1">
        <name>thiamine diphosphate</name>
        <dbReference type="ChEBI" id="CHEBI:58937"/>
    </cofactor>
    <text evidence="1">Binds 1 thiamine pyrophosphate per subunit.</text>
</comment>
<comment type="pathway">
    <text evidence="1">Quinol/quinone metabolism; 1,4-dihydroxy-2-naphthoate biosynthesis; 1,4-dihydroxy-2-naphthoate from chorismate: step 2/7.</text>
</comment>
<comment type="pathway">
    <text evidence="1">Quinol/quinone metabolism; menaquinone biosynthesis.</text>
</comment>
<comment type="subunit">
    <text evidence="1">Homodimer.</text>
</comment>
<comment type="similarity">
    <text evidence="1">Belongs to the TPP enzyme family. MenD subfamily.</text>
</comment>